<reference key="1">
    <citation type="submission" date="2006-11" db="EMBL/GenBank/DDBJ databases">
        <title>Evolution and sequence variation of human beta-defensin genes.</title>
        <authorList>
            <person name="Hollox E.J."/>
            <person name="Armour J.A.L."/>
        </authorList>
    </citation>
    <scope>NUCLEOTIDE SEQUENCE [GENOMIC DNA]</scope>
</reference>
<protein>
    <recommendedName>
        <fullName>Beta-defensin 107A</fullName>
    </recommendedName>
    <alternativeName>
        <fullName>Defensin, beta 107</fullName>
    </alternativeName>
    <alternativeName>
        <fullName>Defensin, beta 107A</fullName>
    </alternativeName>
</protein>
<organism>
    <name type="scientific">Hylobates lar</name>
    <name type="common">Lar gibbon</name>
    <name type="synonym">White-handed gibbon</name>
    <dbReference type="NCBI Taxonomy" id="9580"/>
    <lineage>
        <taxon>Eukaryota</taxon>
        <taxon>Metazoa</taxon>
        <taxon>Chordata</taxon>
        <taxon>Craniata</taxon>
        <taxon>Vertebrata</taxon>
        <taxon>Euteleostomi</taxon>
        <taxon>Mammalia</taxon>
        <taxon>Eutheria</taxon>
        <taxon>Euarchontoglires</taxon>
        <taxon>Primates</taxon>
        <taxon>Haplorrhini</taxon>
        <taxon>Catarrhini</taxon>
        <taxon>Hylobatidae</taxon>
        <taxon>Hylobates</taxon>
    </lineage>
</organism>
<name>D107A_HYLLA</name>
<evidence type="ECO:0000250" key="1"/>
<evidence type="ECO:0000255" key="2"/>
<evidence type="ECO:0000305" key="3"/>
<accession>A4H217</accession>
<feature type="signal peptide" evidence="2">
    <location>
        <begin position="1"/>
        <end position="22"/>
    </location>
</feature>
<feature type="peptide" id="PRO_0000289819" description="Beta-defensin 107A">
    <location>
        <begin position="23"/>
        <end position="66"/>
    </location>
</feature>
<feature type="disulfide bond" evidence="1">
    <location>
        <begin position="37"/>
        <end position="51"/>
    </location>
</feature>
<feature type="disulfide bond" evidence="1">
    <location>
        <begin position="41"/>
        <end position="60"/>
    </location>
</feature>
<gene>
    <name type="primary">DEFB107A</name>
    <name type="synonym">DEFB107</name>
</gene>
<dbReference type="EMBL" id="AM410122">
    <property type="protein sequence ID" value="CAL68937.1"/>
    <property type="molecule type" value="Genomic_DNA"/>
</dbReference>
<dbReference type="SMR" id="A4H217"/>
<dbReference type="GO" id="GO:0005576">
    <property type="term" value="C:extracellular region"/>
    <property type="evidence" value="ECO:0007669"/>
    <property type="project" value="UniProtKB-SubCell"/>
</dbReference>
<dbReference type="GO" id="GO:0042742">
    <property type="term" value="P:defense response to bacterium"/>
    <property type="evidence" value="ECO:0007669"/>
    <property type="project" value="UniProtKB-KW"/>
</dbReference>
<dbReference type="GO" id="GO:0045087">
    <property type="term" value="P:innate immune response"/>
    <property type="evidence" value="ECO:0007669"/>
    <property type="project" value="InterPro"/>
</dbReference>
<dbReference type="InterPro" id="IPR025933">
    <property type="entry name" value="Beta_defensin_dom"/>
</dbReference>
<dbReference type="Pfam" id="PF13841">
    <property type="entry name" value="Defensin_beta_2"/>
    <property type="match status" value="1"/>
</dbReference>
<proteinExistence type="inferred from homology"/>
<comment type="function">
    <text evidence="1">Has antibacterial activity.</text>
</comment>
<comment type="subcellular location">
    <subcellularLocation>
        <location evidence="1">Secreted</location>
    </subcellularLocation>
</comment>
<comment type="similarity">
    <text evidence="3">Belongs to the beta-defensin family.</text>
</comment>
<keyword id="KW-0044">Antibiotic</keyword>
<keyword id="KW-0929">Antimicrobial</keyword>
<keyword id="KW-0211">Defensin</keyword>
<keyword id="KW-1015">Disulfide bond</keyword>
<keyword id="KW-0964">Secreted</keyword>
<keyword id="KW-0732">Signal</keyword>
<sequence length="66" mass="7587">MKIFFFIFAALILLAQIFQARTAIHRALICKRMEGHCEAECLTFEVKIGGCRAELAPFCCKNRKKH</sequence>